<protein>
    <recommendedName>
        <fullName evidence="8">Seipin</fullName>
    </recommendedName>
</protein>
<evidence type="ECO:0000255" key="1"/>
<evidence type="ECO:0000256" key="2">
    <source>
        <dbReference type="SAM" id="MobiDB-lite"/>
    </source>
</evidence>
<evidence type="ECO:0000269" key="3">
    <source>
    </source>
</evidence>
<evidence type="ECO:0000269" key="4">
    <source>
    </source>
</evidence>
<evidence type="ECO:0000269" key="5">
    <source>
    </source>
</evidence>
<evidence type="ECO:0000269" key="6">
    <source>
    </source>
</evidence>
<evidence type="ECO:0000269" key="7">
    <source>
    </source>
</evidence>
<evidence type="ECO:0000303" key="8">
    <source>
    </source>
</evidence>
<evidence type="ECO:0000305" key="9"/>
<evidence type="ECO:0000312" key="10">
    <source>
        <dbReference type="EMBL" id="AAF45798.1"/>
    </source>
</evidence>
<evidence type="ECO:0000312" key="11">
    <source>
        <dbReference type="EMBL" id="AAM51042.1"/>
    </source>
</evidence>
<evidence type="ECO:0000312" key="12">
    <source>
        <dbReference type="EMBL" id="CAB65856.1"/>
    </source>
</evidence>
<evidence type="ECO:0000312" key="13">
    <source>
        <dbReference type="FlyBase" id="FBgn0040336"/>
    </source>
</evidence>
<dbReference type="EMBL" id="AE014298">
    <property type="protein sequence ID" value="AAF45798.1"/>
    <property type="molecule type" value="Genomic_DNA"/>
</dbReference>
<dbReference type="EMBL" id="AL121804">
    <property type="protein sequence ID" value="CAB65856.1"/>
    <property type="molecule type" value="Genomic_DNA"/>
</dbReference>
<dbReference type="EMBL" id="AY119182">
    <property type="protein sequence ID" value="AAM51042.1"/>
    <property type="molecule type" value="mRNA"/>
</dbReference>
<dbReference type="RefSeq" id="NP_570012.1">
    <property type="nucleotide sequence ID" value="NM_130656.4"/>
</dbReference>
<dbReference type="PDB" id="6MLU">
    <property type="method" value="EM"/>
    <property type="resolution" value="4.00 A"/>
    <property type="chains" value="A/B=2-370"/>
</dbReference>
<dbReference type="PDBsum" id="6MLU"/>
<dbReference type="EMDB" id="EMD-9146"/>
<dbReference type="SMR" id="Q9V3X4"/>
<dbReference type="BioGRID" id="57776">
    <property type="interactions" value="16"/>
</dbReference>
<dbReference type="FunCoup" id="Q9V3X4">
    <property type="interactions" value="989"/>
</dbReference>
<dbReference type="IntAct" id="Q9V3X4">
    <property type="interactions" value="3"/>
</dbReference>
<dbReference type="STRING" id="7227.FBpp0070426"/>
<dbReference type="PaxDb" id="7227-FBpp0070426"/>
<dbReference type="DNASU" id="31245"/>
<dbReference type="EnsemblMetazoa" id="FBtr0070442">
    <property type="protein sequence ID" value="FBpp0070426"/>
    <property type="gene ID" value="FBgn0040336"/>
</dbReference>
<dbReference type="GeneID" id="31245"/>
<dbReference type="KEGG" id="dme:Dmel_CG9904"/>
<dbReference type="UCSC" id="CG9904-RA">
    <property type="organism name" value="d. melanogaster"/>
</dbReference>
<dbReference type="AGR" id="FB:FBgn0040336"/>
<dbReference type="CTD" id="31245"/>
<dbReference type="FlyBase" id="FBgn0040336">
    <property type="gene designation" value="Seipin"/>
</dbReference>
<dbReference type="VEuPathDB" id="VectorBase:FBgn0040336"/>
<dbReference type="eggNOG" id="KOG4200">
    <property type="taxonomic scope" value="Eukaryota"/>
</dbReference>
<dbReference type="GeneTree" id="ENSGT00390000011639"/>
<dbReference type="HOGENOM" id="CLU_049458_0_0_1"/>
<dbReference type="InParanoid" id="Q9V3X4"/>
<dbReference type="OMA" id="IFLLSWY"/>
<dbReference type="OrthoDB" id="3990054at2759"/>
<dbReference type="PhylomeDB" id="Q9V3X4"/>
<dbReference type="BioGRID-ORCS" id="31245">
    <property type="hits" value="0 hits in 1 CRISPR screen"/>
</dbReference>
<dbReference type="GenomeRNAi" id="31245"/>
<dbReference type="PRO" id="PR:Q9V3X4"/>
<dbReference type="Proteomes" id="UP000000803">
    <property type="component" value="Chromosome X"/>
</dbReference>
<dbReference type="Bgee" id="FBgn0040336">
    <property type="expression patterns" value="Expressed in enterocyte of posterior adult midgut epithelium (Drosophila) in digestive tract and 59 other cell types or tissues"/>
</dbReference>
<dbReference type="GO" id="GO:0005783">
    <property type="term" value="C:endoplasmic reticulum"/>
    <property type="evidence" value="ECO:0000314"/>
    <property type="project" value="FlyBase"/>
</dbReference>
<dbReference type="GO" id="GO:0005789">
    <property type="term" value="C:endoplasmic reticulum membrane"/>
    <property type="evidence" value="ECO:0000314"/>
    <property type="project" value="UniProtKB"/>
</dbReference>
<dbReference type="GO" id="GO:0005811">
    <property type="term" value="C:lipid droplet"/>
    <property type="evidence" value="ECO:0000314"/>
    <property type="project" value="UniProtKB"/>
</dbReference>
<dbReference type="GO" id="GO:0099103">
    <property type="term" value="F:channel activator activity"/>
    <property type="evidence" value="ECO:0000314"/>
    <property type="project" value="FlyBase"/>
</dbReference>
<dbReference type="GO" id="GO:0046339">
    <property type="term" value="P:diacylglycerol metabolic process"/>
    <property type="evidence" value="ECO:0000315"/>
    <property type="project" value="FlyBase"/>
</dbReference>
<dbReference type="GO" id="GO:0006874">
    <property type="term" value="P:intracellular calcium ion homeostasis"/>
    <property type="evidence" value="ECO:0000315"/>
    <property type="project" value="FlyBase"/>
</dbReference>
<dbReference type="GO" id="GO:0016042">
    <property type="term" value="P:lipid catabolic process"/>
    <property type="evidence" value="ECO:0007669"/>
    <property type="project" value="UniProtKB-KW"/>
</dbReference>
<dbReference type="GO" id="GO:0140042">
    <property type="term" value="P:lipid droplet formation"/>
    <property type="evidence" value="ECO:0000315"/>
    <property type="project" value="UniProtKB"/>
</dbReference>
<dbReference type="GO" id="GO:0034389">
    <property type="term" value="P:lipid droplet organization"/>
    <property type="evidence" value="ECO:0000318"/>
    <property type="project" value="GO_Central"/>
</dbReference>
<dbReference type="GO" id="GO:0019915">
    <property type="term" value="P:lipid storage"/>
    <property type="evidence" value="ECO:0000318"/>
    <property type="project" value="GO_Central"/>
</dbReference>
<dbReference type="GO" id="GO:0046473">
    <property type="term" value="P:phosphatidic acid metabolic process"/>
    <property type="evidence" value="ECO:0000315"/>
    <property type="project" value="FlyBase"/>
</dbReference>
<dbReference type="GO" id="GO:0048691">
    <property type="term" value="P:positive regulation of axon extension involved in regeneration"/>
    <property type="evidence" value="ECO:0000316"/>
    <property type="project" value="FlyBase"/>
</dbReference>
<dbReference type="GO" id="GO:0046890">
    <property type="term" value="P:regulation of lipid biosynthetic process"/>
    <property type="evidence" value="ECO:0000315"/>
    <property type="project" value="FlyBase"/>
</dbReference>
<dbReference type="GO" id="GO:0010883">
    <property type="term" value="P:regulation of lipid storage"/>
    <property type="evidence" value="ECO:0000315"/>
    <property type="project" value="FlyBase"/>
</dbReference>
<dbReference type="GO" id="GO:0090207">
    <property type="term" value="P:regulation of triglyceride metabolic process"/>
    <property type="evidence" value="ECO:0000315"/>
    <property type="project" value="FlyBase"/>
</dbReference>
<dbReference type="GO" id="GO:0042594">
    <property type="term" value="P:response to starvation"/>
    <property type="evidence" value="ECO:0000315"/>
    <property type="project" value="FlyBase"/>
</dbReference>
<dbReference type="CDD" id="cd23993">
    <property type="entry name" value="Seipin"/>
    <property type="match status" value="1"/>
</dbReference>
<dbReference type="InterPro" id="IPR009617">
    <property type="entry name" value="Seipin"/>
</dbReference>
<dbReference type="PANTHER" id="PTHR21212">
    <property type="entry name" value="BERNARDINELLI-SEIP CONGENITAL LIPODYSTROPHY 2 HOMOLOG BSCL2 PROTEIN"/>
    <property type="match status" value="1"/>
</dbReference>
<dbReference type="PANTHER" id="PTHR21212:SF0">
    <property type="entry name" value="SEIPIN"/>
    <property type="match status" value="1"/>
</dbReference>
<dbReference type="Pfam" id="PF06775">
    <property type="entry name" value="Seipin"/>
    <property type="match status" value="1"/>
</dbReference>
<reference evidence="10" key="1">
    <citation type="journal article" date="2000" name="Science">
        <title>The genome sequence of Drosophila melanogaster.</title>
        <authorList>
            <person name="Adams M.D."/>
            <person name="Celniker S.E."/>
            <person name="Holt R.A."/>
            <person name="Evans C.A."/>
            <person name="Gocayne J.D."/>
            <person name="Amanatides P.G."/>
            <person name="Scherer S.E."/>
            <person name="Li P.W."/>
            <person name="Hoskins R.A."/>
            <person name="Galle R.F."/>
            <person name="George R.A."/>
            <person name="Lewis S.E."/>
            <person name="Richards S."/>
            <person name="Ashburner M."/>
            <person name="Henderson S.N."/>
            <person name="Sutton G.G."/>
            <person name="Wortman J.R."/>
            <person name="Yandell M.D."/>
            <person name="Zhang Q."/>
            <person name="Chen L.X."/>
            <person name="Brandon R.C."/>
            <person name="Rogers Y.-H.C."/>
            <person name="Blazej R.G."/>
            <person name="Champe M."/>
            <person name="Pfeiffer B.D."/>
            <person name="Wan K.H."/>
            <person name="Doyle C."/>
            <person name="Baxter E.G."/>
            <person name="Helt G."/>
            <person name="Nelson C.R."/>
            <person name="Miklos G.L.G."/>
            <person name="Abril J.F."/>
            <person name="Agbayani A."/>
            <person name="An H.-J."/>
            <person name="Andrews-Pfannkoch C."/>
            <person name="Baldwin D."/>
            <person name="Ballew R.M."/>
            <person name="Basu A."/>
            <person name="Baxendale J."/>
            <person name="Bayraktaroglu L."/>
            <person name="Beasley E.M."/>
            <person name="Beeson K.Y."/>
            <person name="Benos P.V."/>
            <person name="Berman B.P."/>
            <person name="Bhandari D."/>
            <person name="Bolshakov S."/>
            <person name="Borkova D."/>
            <person name="Botchan M.R."/>
            <person name="Bouck J."/>
            <person name="Brokstein P."/>
            <person name="Brottier P."/>
            <person name="Burtis K.C."/>
            <person name="Busam D.A."/>
            <person name="Butler H."/>
            <person name="Cadieu E."/>
            <person name="Center A."/>
            <person name="Chandra I."/>
            <person name="Cherry J.M."/>
            <person name="Cawley S."/>
            <person name="Dahlke C."/>
            <person name="Davenport L.B."/>
            <person name="Davies P."/>
            <person name="de Pablos B."/>
            <person name="Delcher A."/>
            <person name="Deng Z."/>
            <person name="Mays A.D."/>
            <person name="Dew I."/>
            <person name="Dietz S.M."/>
            <person name="Dodson K."/>
            <person name="Doup L.E."/>
            <person name="Downes M."/>
            <person name="Dugan-Rocha S."/>
            <person name="Dunkov B.C."/>
            <person name="Dunn P."/>
            <person name="Durbin K.J."/>
            <person name="Evangelista C.C."/>
            <person name="Ferraz C."/>
            <person name="Ferriera S."/>
            <person name="Fleischmann W."/>
            <person name="Fosler C."/>
            <person name="Gabrielian A.E."/>
            <person name="Garg N.S."/>
            <person name="Gelbart W.M."/>
            <person name="Glasser K."/>
            <person name="Glodek A."/>
            <person name="Gong F."/>
            <person name="Gorrell J.H."/>
            <person name="Gu Z."/>
            <person name="Guan P."/>
            <person name="Harris M."/>
            <person name="Harris N.L."/>
            <person name="Harvey D.A."/>
            <person name="Heiman T.J."/>
            <person name="Hernandez J.R."/>
            <person name="Houck J."/>
            <person name="Hostin D."/>
            <person name="Houston K.A."/>
            <person name="Howland T.J."/>
            <person name="Wei M.-H."/>
            <person name="Ibegwam C."/>
            <person name="Jalali M."/>
            <person name="Kalush F."/>
            <person name="Karpen G.H."/>
            <person name="Ke Z."/>
            <person name="Kennison J.A."/>
            <person name="Ketchum K.A."/>
            <person name="Kimmel B.E."/>
            <person name="Kodira C.D."/>
            <person name="Kraft C.L."/>
            <person name="Kravitz S."/>
            <person name="Kulp D."/>
            <person name="Lai Z."/>
            <person name="Lasko P."/>
            <person name="Lei Y."/>
            <person name="Levitsky A.A."/>
            <person name="Li J.H."/>
            <person name="Li Z."/>
            <person name="Liang Y."/>
            <person name="Lin X."/>
            <person name="Liu X."/>
            <person name="Mattei B."/>
            <person name="McIntosh T.C."/>
            <person name="McLeod M.P."/>
            <person name="McPherson D."/>
            <person name="Merkulov G."/>
            <person name="Milshina N.V."/>
            <person name="Mobarry C."/>
            <person name="Morris J."/>
            <person name="Moshrefi A."/>
            <person name="Mount S.M."/>
            <person name="Moy M."/>
            <person name="Murphy B."/>
            <person name="Murphy L."/>
            <person name="Muzny D.M."/>
            <person name="Nelson D.L."/>
            <person name="Nelson D.R."/>
            <person name="Nelson K.A."/>
            <person name="Nixon K."/>
            <person name="Nusskern D.R."/>
            <person name="Pacleb J.M."/>
            <person name="Palazzolo M."/>
            <person name="Pittman G.S."/>
            <person name="Pan S."/>
            <person name="Pollard J."/>
            <person name="Puri V."/>
            <person name="Reese M.G."/>
            <person name="Reinert K."/>
            <person name="Remington K."/>
            <person name="Saunders R.D.C."/>
            <person name="Scheeler F."/>
            <person name="Shen H."/>
            <person name="Shue B.C."/>
            <person name="Siden-Kiamos I."/>
            <person name="Simpson M."/>
            <person name="Skupski M.P."/>
            <person name="Smith T.J."/>
            <person name="Spier E."/>
            <person name="Spradling A.C."/>
            <person name="Stapleton M."/>
            <person name="Strong R."/>
            <person name="Sun E."/>
            <person name="Svirskas R."/>
            <person name="Tector C."/>
            <person name="Turner R."/>
            <person name="Venter E."/>
            <person name="Wang A.H."/>
            <person name="Wang X."/>
            <person name="Wang Z.-Y."/>
            <person name="Wassarman D.A."/>
            <person name="Weinstock G.M."/>
            <person name="Weissenbach J."/>
            <person name="Williams S.M."/>
            <person name="Woodage T."/>
            <person name="Worley K.C."/>
            <person name="Wu D."/>
            <person name="Yang S."/>
            <person name="Yao Q.A."/>
            <person name="Ye J."/>
            <person name="Yeh R.-F."/>
            <person name="Zaveri J.S."/>
            <person name="Zhan M."/>
            <person name="Zhang G."/>
            <person name="Zhao Q."/>
            <person name="Zheng L."/>
            <person name="Zheng X.H."/>
            <person name="Zhong F.N."/>
            <person name="Zhong W."/>
            <person name="Zhou X."/>
            <person name="Zhu S.C."/>
            <person name="Zhu X."/>
            <person name="Smith H.O."/>
            <person name="Gibbs R.A."/>
            <person name="Myers E.W."/>
            <person name="Rubin G.M."/>
            <person name="Venter J.C."/>
        </authorList>
    </citation>
    <scope>NUCLEOTIDE SEQUENCE [LARGE SCALE GENOMIC DNA]</scope>
    <source>
        <strain evidence="3">Berkeley</strain>
    </source>
</reference>
<reference evidence="10" key="2">
    <citation type="journal article" date="2002" name="Genome Biol.">
        <title>Annotation of the Drosophila melanogaster euchromatic genome: a systematic review.</title>
        <authorList>
            <person name="Misra S."/>
            <person name="Crosby M.A."/>
            <person name="Mungall C.J."/>
            <person name="Matthews B.B."/>
            <person name="Campbell K.S."/>
            <person name="Hradecky P."/>
            <person name="Huang Y."/>
            <person name="Kaminker J.S."/>
            <person name="Millburn G.H."/>
            <person name="Prochnik S.E."/>
            <person name="Smith C.D."/>
            <person name="Tupy J.L."/>
            <person name="Whitfield E.J."/>
            <person name="Bayraktaroglu L."/>
            <person name="Berman B.P."/>
            <person name="Bettencourt B.R."/>
            <person name="Celniker S.E."/>
            <person name="de Grey A.D.N.J."/>
            <person name="Drysdale R.A."/>
            <person name="Harris N.L."/>
            <person name="Richter J."/>
            <person name="Russo S."/>
            <person name="Schroeder A.J."/>
            <person name="Shu S.Q."/>
            <person name="Stapleton M."/>
            <person name="Yamada C."/>
            <person name="Ashburner M."/>
            <person name="Gelbart W.M."/>
            <person name="Rubin G.M."/>
            <person name="Lewis S.E."/>
        </authorList>
    </citation>
    <scope>GENOME REANNOTATION</scope>
    <source>
        <strain evidence="3">Berkeley</strain>
    </source>
</reference>
<reference evidence="12" key="3">
    <citation type="journal article" date="2000" name="Science">
        <title>From sequence to chromosome: the tip of the X chromosome of D. melanogaster.</title>
        <authorList>
            <person name="Benos P.V."/>
            <person name="Gatt M.K."/>
            <person name="Ashburner M."/>
            <person name="Murphy L."/>
            <person name="Harris D."/>
            <person name="Barrell B.G."/>
            <person name="Ferraz C."/>
            <person name="Vidal S."/>
            <person name="Brun C."/>
            <person name="Demailles J."/>
            <person name="Cadieu E."/>
            <person name="Dreano S."/>
            <person name="Gloux S."/>
            <person name="Lelaure V."/>
            <person name="Mottier S."/>
            <person name="Galibert F."/>
            <person name="Borkova D."/>
            <person name="Minana B."/>
            <person name="Kafatos F.C."/>
            <person name="Louis C."/>
            <person name="Siden-Kiamos I."/>
            <person name="Bolshakov S."/>
            <person name="Papagiannakis G."/>
            <person name="Spanos L."/>
            <person name="Cox S."/>
            <person name="Madueno E."/>
            <person name="de Pablos B."/>
            <person name="Modolell J."/>
            <person name="Peter A."/>
            <person name="Schoettler P."/>
            <person name="Werner M."/>
            <person name="Mourkioti F."/>
            <person name="Beinert N."/>
            <person name="Dowe G."/>
            <person name="Schaefer U."/>
            <person name="Jaeckle H."/>
            <person name="Bucheton A."/>
            <person name="Callister D.M."/>
            <person name="Campbell L.A."/>
            <person name="Darlamitsou A."/>
            <person name="Henderson N.S."/>
            <person name="McMillan P.J."/>
            <person name="Salles C."/>
            <person name="Tait E.A."/>
            <person name="Valenti P."/>
            <person name="Saunders R.D.C."/>
            <person name="Glover D.M."/>
        </authorList>
    </citation>
    <scope>NUCLEOTIDE SEQUENCE [LARGE SCALE GENOMIC DNA]</scope>
    <source>
        <strain evidence="4">Oregon-R</strain>
    </source>
</reference>
<reference evidence="11" key="4">
    <citation type="journal article" date="2002" name="Genome Biol.">
        <title>A Drosophila full-length cDNA resource.</title>
        <authorList>
            <person name="Stapleton M."/>
            <person name="Carlson J.W."/>
            <person name="Brokstein P."/>
            <person name="Yu C."/>
            <person name="Champe M."/>
            <person name="George R.A."/>
            <person name="Guarin H."/>
            <person name="Kronmiller B."/>
            <person name="Pacleb J.M."/>
            <person name="Park S."/>
            <person name="Wan K.H."/>
            <person name="Rubin G.M."/>
            <person name="Celniker S.E."/>
        </authorList>
    </citation>
    <scope>NUCLEOTIDE SEQUENCE [LARGE SCALE MRNA]</scope>
    <source>
        <strain evidence="5">Berkeley</strain>
        <tissue evidence="5">Embryo</tissue>
    </source>
</reference>
<reference evidence="9" key="5">
    <citation type="journal article" date="2011" name="PLoS Genet.">
        <title>Tissue-autonomous function of Drosophila seipin in preventing ectopic lipid droplet formation.</title>
        <authorList>
            <person name="Tian Y."/>
            <person name="Bi J."/>
            <person name="Shui G."/>
            <person name="Liu Z."/>
            <person name="Xiang Y."/>
            <person name="Liu Y."/>
            <person name="Wenk M.R."/>
            <person name="Yang H."/>
            <person name="Huang X."/>
        </authorList>
    </citation>
    <scope>NUCLEOTIDE SEQUENCE [MRNA]</scope>
    <scope>FUNCTION</scope>
    <scope>SUBCELLULAR LOCATION</scope>
    <scope>TISSUE SPECIFICITY</scope>
    <scope>DEVELOPMENTAL STAGE</scope>
    <scope>DISRUPTION PHENOTYPE</scope>
</reference>
<reference key="6">
    <citation type="journal article" date="2016" name="Elife">
        <title>Seipin is required for converting nascent to mature lipid droplets.</title>
        <authorList>
            <person name="Wang H."/>
            <person name="Becuwe M."/>
            <person name="Housden B.E."/>
            <person name="Chitraju C."/>
            <person name="Porras A.J."/>
            <person name="Graham M.M."/>
            <person name="Liu X.N."/>
            <person name="Thiam A.R."/>
            <person name="Savage D.B."/>
            <person name="Agarwal A.K."/>
            <person name="Garg A."/>
            <person name="Olarte M.J."/>
            <person name="Lin Q."/>
            <person name="Froehlich F."/>
            <person name="Hannibal-Bach H.K."/>
            <person name="Upadhyayula S."/>
            <person name="Perrimon N."/>
            <person name="Kirchhausen T."/>
            <person name="Ejsing C.S."/>
            <person name="Walther T.C."/>
            <person name="Farese R.V."/>
        </authorList>
    </citation>
    <scope>FUNCTION</scope>
    <scope>SUBCELLULAR LOCATION</scope>
</reference>
<organism>
    <name type="scientific">Drosophila melanogaster</name>
    <name type="common">Fruit fly</name>
    <dbReference type="NCBI Taxonomy" id="7227"/>
    <lineage>
        <taxon>Eukaryota</taxon>
        <taxon>Metazoa</taxon>
        <taxon>Ecdysozoa</taxon>
        <taxon>Arthropoda</taxon>
        <taxon>Hexapoda</taxon>
        <taxon>Insecta</taxon>
        <taxon>Pterygota</taxon>
        <taxon>Neoptera</taxon>
        <taxon>Endopterygota</taxon>
        <taxon>Diptera</taxon>
        <taxon>Brachycera</taxon>
        <taxon>Muscomorpha</taxon>
        <taxon>Ephydroidea</taxon>
        <taxon>Drosophilidae</taxon>
        <taxon>Drosophila</taxon>
        <taxon>Sophophora</taxon>
    </lineage>
</organism>
<keyword id="KW-0002">3D-structure</keyword>
<keyword id="KW-0256">Endoplasmic reticulum</keyword>
<keyword id="KW-0442">Lipid degradation</keyword>
<keyword id="KW-0551">Lipid droplet</keyword>
<keyword id="KW-0443">Lipid metabolism</keyword>
<keyword id="KW-0472">Membrane</keyword>
<keyword id="KW-1185">Reference proteome</keyword>
<keyword id="KW-0732">Signal</keyword>
<keyword id="KW-0812">Transmembrane</keyword>
<keyword id="KW-1133">Transmembrane helix</keyword>
<gene>
    <name evidence="13" type="primary">Seipin</name>
    <name type="ORF">CG9904</name>
</gene>
<proteinExistence type="evidence at protein level"/>
<sequence>MNILLRLIVFALDPLGLGRRFLIRPAVNLGWNVYDRVRSKADEKVGTVRELVLRLGLIAFAVVLIIWLAVFMYAAFYYVYMPAISHTRPVHMQFKTCLETSTPCTFPHAHVSLTKKQQLLMVGQAYKVIVNIDMPESPQNLELGMFMVCAEMRDYDSMLRGHSCRSAMMRYRSPLIRMISTWVLSPLYVLGWKEEFQQVPVEIFSRYLEERQHPITDVYVEIQSQKIQFYTVTLHIVADFTGLRYIMFNWPVLSAIVAISTNLFFILVVFLLSWYHWSDAKWLHSVQIKYARLTKSLEPGVIHSKASSLRDDDDDLVAYSDKSDIADVGGDTLSDVDADDLVLVKKSRSGKRESPDALRKRPTKKTTADH</sequence>
<name>BSCL2_DROME</name>
<feature type="signal peptide" evidence="1">
    <location>
        <begin position="1"/>
        <end position="18"/>
    </location>
</feature>
<feature type="chain" id="PRO_0000420612" description="Seipin" evidence="1">
    <location>
        <begin position="19"/>
        <end position="370"/>
    </location>
</feature>
<feature type="topological domain" description="Cytoplasmic" evidence="1">
    <location>
        <begin position="19"/>
        <end position="55"/>
    </location>
</feature>
<feature type="transmembrane region" description="Helical" evidence="1">
    <location>
        <begin position="56"/>
        <end position="76"/>
    </location>
</feature>
<feature type="topological domain" description="Lumenal" evidence="1">
    <location>
        <begin position="77"/>
        <end position="251"/>
    </location>
</feature>
<feature type="transmembrane region" description="Helical" evidence="1">
    <location>
        <begin position="252"/>
        <end position="272"/>
    </location>
</feature>
<feature type="topological domain" description="Cytoplasmic" evidence="1">
    <location>
        <begin position="273"/>
        <end position="370"/>
    </location>
</feature>
<feature type="region of interest" description="Disordered" evidence="2">
    <location>
        <begin position="346"/>
        <end position="370"/>
    </location>
</feature>
<feature type="compositionally biased region" description="Basic and acidic residues" evidence="2">
    <location>
        <begin position="350"/>
        <end position="359"/>
    </location>
</feature>
<accession>Q9V3X4</accession>
<comment type="function">
    <text evidence="6 7">Acts as a tissue-autonomous lipid modulator, preventing ectopic lipid accumulation in salivary gland (a non-adipose tissue) and in promoting lipid storage in fat tissue (PubMed:21533227). Required for the growth and maturation of small nascent lipid droplets (LDs) into larger mature LDs (PubMed:27564575).</text>
</comment>
<comment type="subcellular location">
    <subcellularLocation>
        <location evidence="6 7">Endoplasmic reticulum membrane</location>
        <topology evidence="1">Multi-pass membrane protein</topology>
    </subcellularLocation>
    <subcellularLocation>
        <location evidence="7">Lipid droplet</location>
    </subcellularLocation>
    <text evidence="7">Localizes at endoplasmic reticulum-lipid droplets (ER-LD) contact sites.</text>
</comment>
<comment type="tissue specificity">
    <text evidence="6">Widely expressed, with highest levels detected in fat body, moderate levels detected in salivary gland, midgut and muscle, and weak expression detected in brain.</text>
</comment>
<comment type="developmental stage">
    <text evidence="6">At late embryonic stages, highly expressed in hindgut. At larval stages, expression detected in fat body, anterior midgut and salivary gland.</text>
</comment>
<comment type="disruption phenotype">
    <text evidence="6">Flies are viable and fertile with no noticeable behavior defects, but display reduced average weight. The size of the lipid droplets in larval fat bodies and the fat cells of young adults is significantly reduced, but exhibit ectopic lipid droplets in salivary gland and gut. Flies also display greatly reduced total glyceride levels and hypersensitivity to starvation.</text>
</comment>